<sequence length="1121" mass="126912">MSQTLLDSLNQKELTETSCTIEIQAAFILSSLATFFGGLIILFLFRIALKSSRSWKYVKGPRGLLELFSSRRIEANPLRKLYFHGVFRQRIEMLLSAQTVVGQVLVILVFVLSIGSLVIYFINSMDPVRRCSSYEDKIVHVDLSFNAFFSFYFGLRFWAAEDKIKFWLEMNSIVDIFTIPPTFISYYLKSNWLGLRFLRALRLLELPKILQILQVIKTSNSVKLSKLLSIVISTWFTAAGFLHLVENSGDPWLNGRNSQTMSYFESIYLVTATMSTVGFGDVVAKTSLGRIFIVFFTLGSLILFANYIPEMVELFSTRKKYTKPYEAVKGKKFIVVCGNITVDSVTAFLRNFLHWKSGEINIEIVFLGETLPCLELETLLKCHTSCTNFVCGTALKFEDLKRVAVENSEACLILANHFCSDLHDEDNSNIMRVLSIKNYYPQTRVIIQILQSQNKVFLSKIPNWDWSAGDNILCFAELKLGFIAQGCLVPGLCTFLTTLFIEQNQKVFPKHPWQKHFLNGLKNKILTQRLSNDFVGMTFPQVSRLCFVKLNLMLIAIQHKPFFHSCCTLILNPSSQVRLNKDTLGFFIADSSKAVKRAFFYCSNCHSDVCNPELIGKCNCKIKSRQQLIAPTIMVMKSSLTDFTTSSHIHASMSTEIHTCFSREQPSLITITTNRPTTNDTVDDTDMLDSSGMFHWCRAMPLDKVVLKRSEKAKHEFQNHIVVCVFGDAQCTLVGLRNFVMPLRASNYTRQELKDIVFIGSLEYFQREWRFLRNFPKIHIMPGSALYMGDLIAVNVEQCSMCVILATPYKALSSQILVDTEAIMATLNIQSLRITSPTPGSSKSEVKPSSAFDSKERKQRYKQIPILTELKNPSNIHFIEQMGGLDGMLKGTSLHLSTSFSTGAVFSDTFLDSLLATSFYNYHVVELLQMLVTGGISSEMEHYLVKEKPYKTTDDYEAIKSGRTRCKLGLLSLDQTVLSGINPRKTFGQLFCGSLDNFGILCVGLYRMIDEEEPSQEHKRFVITRPSNECHLLPSDLVFCAIPFNTTCGKSDSSPSIQAQNNSTNATTPLAQGSNFFDSHHADESHDLYPVDDTGERWSQHHHSRVYPLDTLDASDIVQEK</sequence>
<reference key="1">
    <citation type="journal article" date="1998" name="J. Biol. Chem.">
        <title>Slo3, a novel pH-sensitive K+ channel from mammalian spermatocytes.</title>
        <authorList>
            <person name="Schreiber M."/>
            <person name="Wei A."/>
            <person name="Yuan A."/>
            <person name="Gaut J."/>
            <person name="Saito M."/>
            <person name="Salkoff L."/>
        </authorList>
    </citation>
    <scope>NUCLEOTIDE SEQUENCE [MRNA]</scope>
    <scope>FUNCTION</scope>
    <scope>TRANSPORTER ACTIVITY</scope>
    <scope>ACTIVITY REGULATION</scope>
    <scope>TISSUE SPECIFICITY</scope>
</reference>
<reference key="2">
    <citation type="journal article" date="2009" name="PLoS Biol.">
        <title>Lineage-specific biology revealed by a finished genome assembly of the mouse.</title>
        <authorList>
            <person name="Church D.M."/>
            <person name="Goodstadt L."/>
            <person name="Hillier L.W."/>
            <person name="Zody M.C."/>
            <person name="Goldstein S."/>
            <person name="She X."/>
            <person name="Bult C.J."/>
            <person name="Agarwala R."/>
            <person name="Cherry J.L."/>
            <person name="DiCuccio M."/>
            <person name="Hlavina W."/>
            <person name="Kapustin Y."/>
            <person name="Meric P."/>
            <person name="Maglott D."/>
            <person name="Birtle Z."/>
            <person name="Marques A.C."/>
            <person name="Graves T."/>
            <person name="Zhou S."/>
            <person name="Teague B."/>
            <person name="Potamousis K."/>
            <person name="Churas C."/>
            <person name="Place M."/>
            <person name="Herschleb J."/>
            <person name="Runnheim R."/>
            <person name="Forrest D."/>
            <person name="Amos-Landgraf J."/>
            <person name="Schwartz D.C."/>
            <person name="Cheng Z."/>
            <person name="Lindblad-Toh K."/>
            <person name="Eichler E.E."/>
            <person name="Ponting C.P."/>
        </authorList>
    </citation>
    <scope>NUCLEOTIDE SEQUENCE [LARGE SCALE GENOMIC DNA]</scope>
    <source>
        <strain>C57BL/6J</strain>
    </source>
</reference>
<reference key="3">
    <citation type="journal article" date="2001" name="J. Gen. Physiol.">
        <title>Intracellular Mg(2+) enhances the function of BK-type Ca(2+)-activated K(+) channels.</title>
        <authorList>
            <person name="Shi J."/>
            <person name="Cui J."/>
        </authorList>
    </citation>
    <scope>FUNCTION</scope>
</reference>
<reference key="4">
    <citation type="journal article" date="2001" name="J. Gen. Physiol.">
        <title>Gating and conductance properties of BK channels are modulated by the S9-S10 tail domain of the alpha subunit. A study of mSlo1 and mSlo3 wild-type and chimeric channels.</title>
        <authorList>
            <person name="Moss B.L."/>
            <person name="Magleby K.L."/>
        </authorList>
    </citation>
    <scope>FUNCTION</scope>
</reference>
<reference key="5">
    <citation type="journal article" date="2004" name="J. Neurosci.">
        <title>Ligand-dependent activation of Slo family channels is defined by interchangeable cytosolic domains.</title>
        <authorList>
            <person name="Xia X.-M."/>
            <person name="Zhang X."/>
            <person name="Lingle C.J."/>
        </authorList>
    </citation>
    <scope>FUNCTION</scope>
</reference>
<reference key="6">
    <citation type="journal article" date="2006" name="J. Gen. Physiol.">
        <title>Slo3 K+ channels: voltage and pH dependence of macroscopic currents.</title>
        <authorList>
            <person name="Zhang X."/>
            <person name="Zeng X."/>
            <person name="Lingle C.J."/>
        </authorList>
    </citation>
    <scope>FUNCTION</scope>
</reference>
<reference key="7">
    <citation type="journal article" date="2006" name="J. Gen. Physiol.">
        <title>pH-regulated Slo3 K+ channels: properties of unitary currents.</title>
        <authorList>
            <person name="Zhang X."/>
            <person name="Zeng X."/>
            <person name="Xia X.-M."/>
            <person name="Lingle C.J."/>
        </authorList>
    </citation>
    <scope>FUNCTION</scope>
    <scope>MUTAGENESIS OF PHE-279</scope>
</reference>
<reference key="8">
    <citation type="journal article" date="2010" name="FEBS Lett.">
        <title>The SLO3 sperm-specific potassium channel plays a vital role in male fertility.</title>
        <authorList>
            <person name="Santi C.M."/>
            <person name="Martinez-Lopez P."/>
            <person name="de la Vega-Beltran J.L."/>
            <person name="Butler A."/>
            <person name="Alisio A."/>
            <person name="Darszon A."/>
            <person name="Salkoff L."/>
        </authorList>
    </citation>
    <scope>FUNCTION</scope>
    <scope>DISRUPTION PHENOTYPE</scope>
</reference>
<reference key="9">
    <citation type="journal article" date="2011" name="Proc. Natl. Acad. Sci. U.S.A.">
        <title>Deletion of the Slo3 gene abolishes alkalization-activated K+ current in mouse spermatozoa.</title>
        <authorList>
            <person name="Zeng X.H."/>
            <person name="Yang C."/>
            <person name="Kim S.T."/>
            <person name="Lingle C.J."/>
            <person name="Xia X.M."/>
        </authorList>
    </citation>
    <scope>FUNCTION</scope>
    <scope>DISRUPTION PHENOTYPE</scope>
    <scope>TISSUE SPECIFICITY</scope>
</reference>
<reference key="10">
    <citation type="journal article" date="2011" name="Proc. Natl. Acad. Sci. U.S.A.">
        <title>LRRC52 (leucine-rich-repeat-containing protein 52), a testis-specific auxiliary subunit of the alkalization-activated Slo3 channel.</title>
        <authorList>
            <person name="Yang C."/>
            <person name="Zeng X.H."/>
            <person name="Zhou Y."/>
            <person name="Xia X.M."/>
            <person name="Lingle C.J."/>
        </authorList>
    </citation>
    <scope>INTERACTION WITH LRRC52</scope>
    <scope>SUBCELLULAR LOCATION</scope>
    <scope>DEVELOPMENTAL STAGE</scope>
</reference>
<reference key="11">
    <citation type="journal article" date="2012" name="Proc. Natl. Acad. Sci. U.S.A.">
        <title>Functional and structural analysis of the human SLO3 pH- and voltage-gated K+ channel.</title>
        <authorList>
            <person name="Leonetti M.D."/>
            <person name="Yuan P."/>
            <person name="Hsiung Y."/>
            <person name="Mackinnon R."/>
        </authorList>
    </citation>
    <scope>FUNCTION</scope>
</reference>
<reference key="12">
    <citation type="journal article" date="2015" name="Proc. Natl. Acad. Sci. U.S.A.">
        <title>SLO3 auxiliary subunit LRRC52 controls gating of sperm KSPER currents and is critical for normal fertility.</title>
        <authorList>
            <person name="Zeng X.H."/>
            <person name="Yang C."/>
            <person name="Xia X.M."/>
            <person name="Liu M."/>
            <person name="Lingle C.J."/>
        </authorList>
    </citation>
    <scope>DISRUPTION PHENOTYPE</scope>
    <scope>FUNCTION</scope>
    <scope>TRANSPORTER ACTIVITY</scope>
</reference>
<reference key="13">
    <citation type="journal article" date="2019" name="Mol. Biol. Rep.">
        <title>A cytoplasmic Slo3 isoform is expressed in somatic tissues.</title>
        <authorList>
            <person name="Chavez J.C."/>
            <person name="Vicens A."/>
            <person name="Wrighton D.C."/>
            <person name="Andrade-Lopez K."/>
            <person name="Beltran C."/>
            <person name="Gutierrez R.M."/>
            <person name="Lippiat J.D."/>
            <person name="Trevino C.L."/>
        </authorList>
    </citation>
    <scope>SUBCELLULAR LOCATION (ISOFORM 2)</scope>
    <scope>TISSUE SPECIFICITY (ISOFORMS 1 AND 2)</scope>
</reference>
<reference key="14">
    <citation type="journal article" date="2022" name="Hum. Reprod.">
        <title>Bi-allelic variants in KCNU1 cause impaired acrosome reactions and male infertility.</title>
        <authorList>
            <person name="Liu R."/>
            <person name="Yan Z."/>
            <person name="Fan Y."/>
            <person name="Qu R."/>
            <person name="Chen B."/>
            <person name="Li B."/>
            <person name="Wu L."/>
            <person name="Wu H."/>
            <person name="Mu J."/>
            <person name="Zhao L."/>
            <person name="Wang W."/>
            <person name="Dong J."/>
            <person name="Zeng Y."/>
            <person name="Li Q."/>
            <person name="Wang L."/>
            <person name="Sang Q."/>
            <person name="Zhang Z."/>
            <person name="Kuang Y."/>
        </authorList>
    </citation>
    <scope>MUTAGENESIS OF HIS-720</scope>
</reference>
<proteinExistence type="evidence at protein level"/>
<dbReference type="EMBL" id="AF039213">
    <property type="protein sequence ID" value="AAB99742.2"/>
    <property type="molecule type" value="mRNA"/>
</dbReference>
<dbReference type="CCDS" id="CCDS52530.1">
    <molecule id="O54982-1"/>
</dbReference>
<dbReference type="PIR" id="T42383">
    <property type="entry name" value="T42383"/>
</dbReference>
<dbReference type="RefSeq" id="NP_032458.3">
    <molecule id="O54982-1"/>
    <property type="nucleotide sequence ID" value="NM_008432.3"/>
</dbReference>
<dbReference type="SMR" id="O54982"/>
<dbReference type="FunCoup" id="O54982">
    <property type="interactions" value="166"/>
</dbReference>
<dbReference type="STRING" id="10090.ENSMUSP00000096457"/>
<dbReference type="TCDB" id="1.A.1.3.5">
    <property type="family name" value="the voltage-gated ion channel (vic) superfamily"/>
</dbReference>
<dbReference type="GlyGen" id="O54982">
    <property type="glycosylation" value="1 site"/>
</dbReference>
<dbReference type="PhosphoSitePlus" id="O54982"/>
<dbReference type="PaxDb" id="10090-ENSMUSP00000096457"/>
<dbReference type="ProteomicsDB" id="268968"/>
<dbReference type="ProteomicsDB" id="341028"/>
<dbReference type="ProteomicsDB" id="371643"/>
<dbReference type="ABCD" id="O54982">
    <property type="antibodies" value="1 sequenced antibody"/>
</dbReference>
<dbReference type="Antibodypedia" id="57826">
    <property type="antibodies" value="75 antibodies from 13 providers"/>
</dbReference>
<dbReference type="DNASU" id="16532"/>
<dbReference type="Ensembl" id="ENSMUST00000098858.11">
    <molecule id="O54982-1"/>
    <property type="protein sequence ID" value="ENSMUSP00000096457.4"/>
    <property type="gene ID" value="ENSMUSG00000031576.17"/>
</dbReference>
<dbReference type="Ensembl" id="ENSMUST00000120653.8">
    <molecule id="O54982-2"/>
    <property type="protein sequence ID" value="ENSMUSP00000113442.2"/>
    <property type="gene ID" value="ENSMUSG00000031576.17"/>
</dbReference>
<dbReference type="GeneID" id="16532"/>
<dbReference type="KEGG" id="mmu:16532"/>
<dbReference type="AGR" id="MGI:1202300"/>
<dbReference type="CTD" id="157855"/>
<dbReference type="MGI" id="MGI:1202300">
    <property type="gene designation" value="Kcnu1"/>
</dbReference>
<dbReference type="VEuPathDB" id="HostDB:ENSMUSG00000031576"/>
<dbReference type="eggNOG" id="KOG1420">
    <property type="taxonomic scope" value="Eukaryota"/>
</dbReference>
<dbReference type="GeneTree" id="ENSGT00940000161817"/>
<dbReference type="HOGENOM" id="CLU_006846_0_0_1"/>
<dbReference type="InParanoid" id="O54982"/>
<dbReference type="OMA" id="NWNTGDN"/>
<dbReference type="OrthoDB" id="10035564at2759"/>
<dbReference type="PhylomeDB" id="O54982"/>
<dbReference type="TreeFam" id="TF314283"/>
<dbReference type="Reactome" id="R-MMU-1300642">
    <property type="pathway name" value="Sperm Motility And Taxes"/>
</dbReference>
<dbReference type="BioGRID-ORCS" id="16532">
    <property type="hits" value="1 hit in 79 CRISPR screens"/>
</dbReference>
<dbReference type="ChiTaRS" id="Kcnu1">
    <property type="organism name" value="mouse"/>
</dbReference>
<dbReference type="PRO" id="PR:O54982"/>
<dbReference type="Proteomes" id="UP000000589">
    <property type="component" value="Chromosome 8"/>
</dbReference>
<dbReference type="RNAct" id="O54982">
    <property type="molecule type" value="protein"/>
</dbReference>
<dbReference type="Bgee" id="ENSMUSG00000031576">
    <property type="expression patterns" value="Expressed in spermatid and 60 other cell types or tissues"/>
</dbReference>
<dbReference type="GO" id="GO:0005737">
    <property type="term" value="C:cytoplasm"/>
    <property type="evidence" value="ECO:0007669"/>
    <property type="project" value="UniProtKB-SubCell"/>
</dbReference>
<dbReference type="GO" id="GO:0034702">
    <property type="term" value="C:monoatomic ion channel complex"/>
    <property type="evidence" value="ECO:0007669"/>
    <property type="project" value="UniProtKB-KW"/>
</dbReference>
<dbReference type="GO" id="GO:0005886">
    <property type="term" value="C:plasma membrane"/>
    <property type="evidence" value="ECO:0000314"/>
    <property type="project" value="UniProtKB"/>
</dbReference>
<dbReference type="GO" id="GO:0036126">
    <property type="term" value="C:sperm flagellum"/>
    <property type="evidence" value="ECO:0000250"/>
    <property type="project" value="UniProtKB"/>
</dbReference>
<dbReference type="GO" id="GO:0005267">
    <property type="term" value="F:potassium channel activity"/>
    <property type="evidence" value="ECO:0000314"/>
    <property type="project" value="UniProtKB"/>
</dbReference>
<dbReference type="GO" id="GO:0051649">
    <property type="term" value="P:establishment of localization in cell"/>
    <property type="evidence" value="ECO:0000315"/>
    <property type="project" value="MGI"/>
</dbReference>
<dbReference type="GO" id="GO:0009566">
    <property type="term" value="P:fertilization"/>
    <property type="evidence" value="ECO:0000315"/>
    <property type="project" value="UniProtKB"/>
</dbReference>
<dbReference type="GO" id="GO:0006813">
    <property type="term" value="P:potassium ion transport"/>
    <property type="evidence" value="ECO:0000314"/>
    <property type="project" value="UniProtKB"/>
</dbReference>
<dbReference type="GO" id="GO:0050821">
    <property type="term" value="P:protein stabilization"/>
    <property type="evidence" value="ECO:0000315"/>
    <property type="project" value="MGI"/>
</dbReference>
<dbReference type="GO" id="GO:0022414">
    <property type="term" value="P:reproductive process"/>
    <property type="evidence" value="ECO:0000250"/>
    <property type="project" value="UniProtKB"/>
</dbReference>
<dbReference type="FunFam" id="3.40.50.720:FF:000005">
    <property type="entry name" value="calcium-activated potassium channel subunit alpha-1 isoform X6"/>
    <property type="match status" value="1"/>
</dbReference>
<dbReference type="FunFam" id="1.10.287.70:FF:000130">
    <property type="entry name" value="Potassium calcium-activated channel subfamily U member 1"/>
    <property type="match status" value="1"/>
</dbReference>
<dbReference type="FunFam" id="3.40.50.720:FF:000403">
    <property type="entry name" value="Potassium calcium-activated channel subfamily U member 1"/>
    <property type="match status" value="1"/>
</dbReference>
<dbReference type="Gene3D" id="1.10.287.70">
    <property type="match status" value="1"/>
</dbReference>
<dbReference type="Gene3D" id="3.40.50.720">
    <property type="entry name" value="NAD(P)-binding Rossmann-like Domain"/>
    <property type="match status" value="2"/>
</dbReference>
<dbReference type="InterPro" id="IPR005821">
    <property type="entry name" value="Ion_trans_dom"/>
</dbReference>
<dbReference type="InterPro" id="IPR003929">
    <property type="entry name" value="K_chnl_BK_asu"/>
</dbReference>
<dbReference type="InterPro" id="IPR047871">
    <property type="entry name" value="K_chnl_Slo-like"/>
</dbReference>
<dbReference type="InterPro" id="IPR003148">
    <property type="entry name" value="RCK_N"/>
</dbReference>
<dbReference type="InterPro" id="IPR048735">
    <property type="entry name" value="Slowpoke-like_C"/>
</dbReference>
<dbReference type="PANTHER" id="PTHR10027">
    <property type="entry name" value="CALCIUM-ACTIVATED POTASSIUM CHANNEL ALPHA CHAIN"/>
    <property type="match status" value="1"/>
</dbReference>
<dbReference type="PANTHER" id="PTHR10027:SF23">
    <property type="entry name" value="POTASSIUM CHANNEL SUBFAMILY U MEMBER 1"/>
    <property type="match status" value="1"/>
</dbReference>
<dbReference type="Pfam" id="PF03493">
    <property type="entry name" value="BK_channel_a"/>
    <property type="match status" value="1"/>
</dbReference>
<dbReference type="Pfam" id="PF00520">
    <property type="entry name" value="Ion_trans"/>
    <property type="match status" value="1"/>
</dbReference>
<dbReference type="Pfam" id="PF22614">
    <property type="entry name" value="Slo-like_RCK"/>
    <property type="match status" value="2"/>
</dbReference>
<dbReference type="Pfam" id="PF21014">
    <property type="entry name" value="Slowpoke_C"/>
    <property type="match status" value="1"/>
</dbReference>
<dbReference type="PRINTS" id="PR01449">
    <property type="entry name" value="BKCHANNELA"/>
</dbReference>
<dbReference type="PRINTS" id="PR00169">
    <property type="entry name" value="KCHANNEL"/>
</dbReference>
<dbReference type="SUPFAM" id="SSF81324">
    <property type="entry name" value="Voltage-gated potassium channels"/>
    <property type="match status" value="1"/>
</dbReference>
<dbReference type="PROSITE" id="PS51201">
    <property type="entry name" value="RCK_N"/>
    <property type="match status" value="2"/>
</dbReference>
<protein>
    <recommendedName>
        <fullName>Potassium channel subfamily U member 1</fullName>
    </recommendedName>
    <alternativeName>
        <fullName>Calcium-activated potassium channel subunit alpha-3</fullName>
    </alternativeName>
    <alternativeName>
        <fullName>Calcium-activated potassium channel, subfamily M subunit alpha-3</fullName>
    </alternativeName>
    <alternativeName>
        <fullName>Pore-forming subunit of the sperm-specific alkalization activated K(+) current</fullName>
        <shortName>KSper</shortName>
    </alternativeName>
    <alternativeName>
        <fullName>Slowpoke homolog 3</fullName>
        <shortName>mSlo3</shortName>
    </alternativeName>
    <alternativeName>
        <fullName>pH-sensitive maxi potassium channel</fullName>
    </alternativeName>
</protein>
<organism>
    <name type="scientific">Mus musculus</name>
    <name type="common">Mouse</name>
    <dbReference type="NCBI Taxonomy" id="10090"/>
    <lineage>
        <taxon>Eukaryota</taxon>
        <taxon>Metazoa</taxon>
        <taxon>Chordata</taxon>
        <taxon>Craniata</taxon>
        <taxon>Vertebrata</taxon>
        <taxon>Euteleostomi</taxon>
        <taxon>Mammalia</taxon>
        <taxon>Eutheria</taxon>
        <taxon>Euarchontoglires</taxon>
        <taxon>Glires</taxon>
        <taxon>Rodentia</taxon>
        <taxon>Myomorpha</taxon>
        <taxon>Muroidea</taxon>
        <taxon>Muridae</taxon>
        <taxon>Murinae</taxon>
        <taxon>Mus</taxon>
        <taxon>Mus</taxon>
    </lineage>
</organism>
<name>KCNU1_MOUSE</name>
<accession>O54982</accession>
<accession>D3Z5P2</accession>
<accession>G3X9P7</accession>
<keyword id="KW-0024">Alternative initiation</keyword>
<keyword id="KW-1003">Cell membrane</keyword>
<keyword id="KW-0963">Cytoplasm</keyword>
<keyword id="KW-0407">Ion channel</keyword>
<keyword id="KW-0406">Ion transport</keyword>
<keyword id="KW-0472">Membrane</keyword>
<keyword id="KW-0630">Potassium</keyword>
<keyword id="KW-0631">Potassium channel</keyword>
<keyword id="KW-0633">Potassium transport</keyword>
<keyword id="KW-1185">Reference proteome</keyword>
<keyword id="KW-0812">Transmembrane</keyword>
<keyword id="KW-1133">Transmembrane helix</keyword>
<keyword id="KW-0813">Transport</keyword>
<keyword id="KW-0851">Voltage-gated channel</keyword>
<gene>
    <name type="primary">Kcnu1</name>
    <name type="synonym">Kcnma3</name>
    <name type="synonym">Ksper</name>
    <name type="synonym">Slo3</name>
</gene>
<feature type="chain" id="PRO_0000349188" description="Potassium channel subfamily U member 1">
    <location>
        <begin position="1"/>
        <end position="1121"/>
    </location>
</feature>
<feature type="topological domain" description="Extracellular" evidence="3">
    <location>
        <begin position="1"/>
        <end position="24"/>
    </location>
</feature>
<feature type="transmembrane region" description="Helical; Name=Segment S0" evidence="3">
    <location>
        <begin position="25"/>
        <end position="45"/>
    </location>
</feature>
<feature type="topological domain" description="Cytoplasmic" evidence="3">
    <location>
        <begin position="46"/>
        <end position="101"/>
    </location>
</feature>
<feature type="transmembrane region" description="Helical; Name=Segment S1" evidence="3">
    <location>
        <begin position="102"/>
        <end position="122"/>
    </location>
</feature>
<feature type="topological domain" description="Extracellular" evidence="3">
    <location>
        <begin position="123"/>
        <end position="137"/>
    </location>
</feature>
<feature type="transmembrane region" description="Helical; Name=Segment S2" evidence="3">
    <location>
        <begin position="138"/>
        <end position="158"/>
    </location>
</feature>
<feature type="topological domain" description="Cytoplasmic" evidence="3">
    <location>
        <begin position="159"/>
        <end position="165"/>
    </location>
</feature>
<feature type="transmembrane region" description="Helical; Name=Segment S3" evidence="3">
    <location>
        <begin position="166"/>
        <end position="186"/>
    </location>
</feature>
<feature type="topological domain" description="Extracellular" evidence="3">
    <location>
        <begin position="187"/>
        <end position="188"/>
    </location>
</feature>
<feature type="transmembrane region" description="Helical; Voltage-sensor; Name=Segment S4" evidence="3">
    <location>
        <begin position="189"/>
        <end position="209"/>
    </location>
</feature>
<feature type="topological domain" description="Cytoplasmic" evidence="3">
    <location>
        <begin position="210"/>
        <end position="226"/>
    </location>
</feature>
<feature type="transmembrane region" description="Helical; Name=Segment S5" evidence="3">
    <location>
        <begin position="227"/>
        <end position="247"/>
    </location>
</feature>
<feature type="topological domain" description="Extracellular" evidence="3">
    <location>
        <begin position="248"/>
        <end position="259"/>
    </location>
</feature>
<feature type="intramembrane region" description="Pore-forming; Name=P region" evidence="3">
    <location>
        <begin position="260"/>
        <end position="282"/>
    </location>
</feature>
<feature type="topological domain" description="Extracellular" evidence="3">
    <location>
        <begin position="283"/>
        <end position="290"/>
    </location>
</feature>
<feature type="transmembrane region" description="Helical; Name=Segment S6" evidence="3">
    <location>
        <begin position="291"/>
        <end position="311"/>
    </location>
</feature>
<feature type="topological domain" description="Cytoplasmic" evidence="3">
    <location>
        <begin position="312"/>
        <end position="1121"/>
    </location>
</feature>
<feature type="domain" description="RCK N-terminal 1" evidence="4">
    <location>
        <begin position="331"/>
        <end position="473"/>
    </location>
</feature>
<feature type="domain" description="RCK N-terminal 2" evidence="4">
    <location>
        <begin position="718"/>
        <end position="889"/>
    </location>
</feature>
<feature type="region of interest" description="Disordered" evidence="5">
    <location>
        <begin position="836"/>
        <end position="858"/>
    </location>
</feature>
<feature type="region of interest" description="Disordered" evidence="5">
    <location>
        <begin position="1052"/>
        <end position="1076"/>
    </location>
</feature>
<feature type="short sequence motif" description="Selectivity for potassium">
    <location>
        <begin position="276"/>
        <end position="279"/>
    </location>
</feature>
<feature type="splice variant" id="VSP_062359" description="In isoform 2.">
    <location>
        <begin position="1"/>
        <end position="740"/>
    </location>
</feature>
<feature type="mutagenesis site" description="Does not induce any change in single channel conductance or variance in open current levels." evidence="9">
    <original>F</original>
    <variation>Y</variation>
    <location>
        <position position="279"/>
    </location>
</feature>
<feature type="mutagenesis site" description="Homozygous males are infertile. In mutant sperm, the protein is barely detectable by Western blot." evidence="17">
    <original>H</original>
    <variation>R</variation>
    <location>
        <position position="720"/>
    </location>
</feature>
<feature type="sequence conflict" description="In Ref. 1; AAB99742." evidence="19" ref="1">
    <original>V</original>
    <variation>G</variation>
    <location>
        <position position="141"/>
    </location>
</feature>
<evidence type="ECO:0000250" key="1"/>
<evidence type="ECO:0000250" key="2">
    <source>
        <dbReference type="UniProtKB" id="Q12791"/>
    </source>
</evidence>
<evidence type="ECO:0000255" key="3"/>
<evidence type="ECO:0000255" key="4">
    <source>
        <dbReference type="PROSITE-ProRule" id="PRU00543"/>
    </source>
</evidence>
<evidence type="ECO:0000256" key="5">
    <source>
        <dbReference type="SAM" id="MobiDB-lite"/>
    </source>
</evidence>
<evidence type="ECO:0000269" key="6">
    <source>
    </source>
</evidence>
<evidence type="ECO:0000269" key="7">
    <source>
    </source>
</evidence>
<evidence type="ECO:0000269" key="8">
    <source>
    </source>
</evidence>
<evidence type="ECO:0000269" key="9">
    <source>
    </source>
</evidence>
<evidence type="ECO:0000269" key="10">
    <source>
    </source>
</evidence>
<evidence type="ECO:0000269" key="11">
    <source>
    </source>
</evidence>
<evidence type="ECO:0000269" key="12">
    <source>
    </source>
</evidence>
<evidence type="ECO:0000269" key="13">
    <source>
    </source>
</evidence>
<evidence type="ECO:0000269" key="14">
    <source>
    </source>
</evidence>
<evidence type="ECO:0000269" key="15">
    <source>
    </source>
</evidence>
<evidence type="ECO:0000269" key="16">
    <source>
    </source>
</evidence>
<evidence type="ECO:0000269" key="17">
    <source>
    </source>
</evidence>
<evidence type="ECO:0000269" key="18">
    <source>
    </source>
</evidence>
<evidence type="ECO:0000305" key="19"/>
<comment type="function">
    <text evidence="6 7 8 9 10 11 12 14 15 18">Testis-specific potassium channel activated by both intracellular pH and membrane voltage that mediates export of K(+) (PubMed:25675513, PubMed:9452476). Represents the primary spermatozoan K(+) current. The channel underlies a pH-triggered membrane hyperpolarization during the process of sperm capacitation, as sperm encounter the alkaline environment near the ovum in the female reproductive tract, thereby playing an essential for male fertility (PubMed:11696614, PubMed:11723163, PubMed:15201331, PubMed:16940554, PubMed:16940555, PubMed:20138882, PubMed:21427226, PubMed:23129643, PubMed:25675513, PubMed:9452476).</text>
</comment>
<comment type="catalytic activity">
    <reaction evidence="15 18">
        <text>K(+)(in) = K(+)(out)</text>
        <dbReference type="Rhea" id="RHEA:29463"/>
        <dbReference type="ChEBI" id="CHEBI:29103"/>
    </reaction>
</comment>
<comment type="activity regulation">
    <text evidence="13 18">Regulated by changes in cytosolic pH; activated by alkalization (PubMed:9452476). In contrast to human KCNU1 is not activated by Ca(2+) or Mg(2+) (PubMed:9452476). The auxiliary subunit LRRC52 shifts the activation of KCNU1 to more negative potentials at a given pH (PubMed:22084117).</text>
</comment>
<comment type="subunit">
    <text evidence="2 13">Homotetramer; which constitutes the calcium-activated potassium channel (By similarity). Interact with LRRC52; this interaction changes some channel gating properties, such as shifting gating to more negative potentials at a given pH (PubMed:22084117).</text>
</comment>
<comment type="subcellular location">
    <molecule>Isoform 1</molecule>
    <subcellularLocation>
        <location evidence="13">Cell membrane</location>
        <topology evidence="3">Multi-pass membrane protein</topology>
    </subcellularLocation>
</comment>
<comment type="subcellular location">
    <molecule>Isoform 2</molecule>
    <subcellularLocation>
        <location evidence="16">Cytoplasm</location>
    </subcellularLocation>
</comment>
<comment type="alternative products">
    <event type="alternative initiation"/>
    <isoform>
        <id>O54982-1</id>
        <name>1</name>
        <sequence type="displayed"/>
    </isoform>
    <isoform>
        <id>O54982-2</id>
        <name>2</name>
        <sequence type="described" ref="VSP_062359"/>
    </isoform>
</comment>
<comment type="tissue specificity">
    <molecule>Isoform 1</molecule>
    <text evidence="12 16 18">Testis-specific. Mainly expressed in spermatocytes.</text>
</comment>
<comment type="tissue specificity">
    <molecule>Isoform 2</molecule>
    <text evidence="16">Expressed in testis, brain, eye and kidney.</text>
</comment>
<comment type="developmental stage">
    <text evidence="13">Very low expression levels in testis before postnatal day 25 (P25). Levels strongly increase between P25 and P30, and then remain high from P30 through P150.</text>
</comment>
<comment type="domain">
    <text evidence="1">The S4 segment, which is characterized by a series of positively charged amino acids at every third position, is part of the voltage-sensor.</text>
</comment>
<comment type="domain">
    <text evidence="1">The pore-forming domain (also referred as P region) is imbedded into the membrane, and forms the selectivity filter of the pore. It contains the signature sequence of potassium channels that displays selectivity to potassium (By similarity).</text>
</comment>
<comment type="domain">
    <text evidence="2">The RCK N-terminal domain mediates the homotetramerization, thereby promoting the assembly of monomers into functional potassium channel.</text>
</comment>
<comment type="domain">
    <text>The C-terminal cytosolic region confers the pH-dependence.</text>
</comment>
<comment type="disruption phenotype">
    <text evidence="11 12 15">Mutant males are infertile due to abnormal sperm physiology with no overtly abnormal nonreproductive phenotypes detected. Sperm cells from these mutant mice exhibit several functional defects, such as absence of hyperactivated motility, lack of capacitation-associated membrane hyperpolarization and are unable to respond to acrosome reaction induction.</text>
</comment>
<comment type="similarity">
    <text evidence="19">Belongs to the potassium channel family. Calcium-activated (TC 1.A.1.3) subfamily. KCa5.1/KCNU1 sub-subfamily.</text>
</comment>